<feature type="chain" id="PRO_0000314926" description="2-phosphoxylose phosphatase 1">
    <location>
        <begin position="1"/>
        <end position="480"/>
    </location>
</feature>
<feature type="topological domain" description="Cytoplasmic" evidence="3">
    <location>
        <begin position="1"/>
        <end position="6"/>
    </location>
</feature>
<feature type="transmembrane region" description="Helical; Signal-anchor for type II membrane protein" evidence="3">
    <location>
        <begin position="7"/>
        <end position="27"/>
    </location>
</feature>
<feature type="topological domain" description="Lumenal" evidence="3">
    <location>
        <begin position="28"/>
        <end position="480"/>
    </location>
</feature>
<feature type="active site" description="Nucleophile" evidence="1">
    <location>
        <position position="97"/>
    </location>
</feature>
<feature type="active site" description="Proton donor" evidence="1">
    <location>
        <position position="379"/>
    </location>
</feature>
<feature type="glycosylation site" description="N-linked (GlcNAc...) asparagine" evidence="4">
    <location>
        <position position="194"/>
    </location>
</feature>
<feature type="glycosylation site" description="N-linked (GlcNAc...) asparagine" evidence="3">
    <location>
        <position position="305"/>
    </location>
</feature>
<feature type="glycosylation site" description="N-linked (GlcNAc...) asparagine" evidence="4">
    <location>
        <position position="354"/>
    </location>
</feature>
<proteinExistence type="evidence at transcript level"/>
<dbReference type="EC" id="3.1.3.-" evidence="2"/>
<dbReference type="EMBL" id="BC081981">
    <property type="protein sequence ID" value="AAH81981.1"/>
    <property type="molecule type" value="mRNA"/>
</dbReference>
<dbReference type="RefSeq" id="NP_001007711.1">
    <property type="nucleotide sequence ID" value="NM_001007710.1"/>
</dbReference>
<dbReference type="RefSeq" id="XP_006243653.1">
    <property type="nucleotide sequence ID" value="XM_006243591.5"/>
</dbReference>
<dbReference type="RefSeq" id="XP_006243654.1">
    <property type="nucleotide sequence ID" value="XM_006243592.4"/>
</dbReference>
<dbReference type="RefSeq" id="XP_063121655.1">
    <property type="nucleotide sequence ID" value="XM_063265585.1"/>
</dbReference>
<dbReference type="RefSeq" id="XP_063121656.1">
    <property type="nucleotide sequence ID" value="XM_063265586.1"/>
</dbReference>
<dbReference type="SMR" id="Q66H78"/>
<dbReference type="FunCoup" id="Q66H78">
    <property type="interactions" value="916"/>
</dbReference>
<dbReference type="STRING" id="10116.ENSRNOP00000017085"/>
<dbReference type="GlyCosmos" id="Q66H78">
    <property type="glycosylation" value="3 sites, No reported glycans"/>
</dbReference>
<dbReference type="GlyGen" id="Q66H78">
    <property type="glycosylation" value="3 sites"/>
</dbReference>
<dbReference type="PhosphoSitePlus" id="Q66H78"/>
<dbReference type="PaxDb" id="10116-ENSRNOP00000017085"/>
<dbReference type="Ensembl" id="ENSRNOT00000017085.5">
    <property type="protein sequence ID" value="ENSRNOP00000017085.4"/>
    <property type="gene ID" value="ENSRNOG00000012480.5"/>
</dbReference>
<dbReference type="GeneID" id="315939"/>
<dbReference type="KEGG" id="rno:315939"/>
<dbReference type="UCSC" id="RGD:1359617">
    <property type="organism name" value="rat"/>
</dbReference>
<dbReference type="AGR" id="RGD:1359617"/>
<dbReference type="CTD" id="92370"/>
<dbReference type="RGD" id="1359617">
    <property type="gene designation" value="Pxylp1"/>
</dbReference>
<dbReference type="eggNOG" id="KOG3672">
    <property type="taxonomic scope" value="Eukaryota"/>
</dbReference>
<dbReference type="GeneTree" id="ENSGT00390000016324"/>
<dbReference type="HOGENOM" id="CLU_033855_1_0_1"/>
<dbReference type="InParanoid" id="Q66H78"/>
<dbReference type="OMA" id="YIWNAAE"/>
<dbReference type="OrthoDB" id="10262962at2759"/>
<dbReference type="PhylomeDB" id="Q66H78"/>
<dbReference type="TreeFam" id="TF318821"/>
<dbReference type="PRO" id="PR:Q66H78"/>
<dbReference type="Proteomes" id="UP000002494">
    <property type="component" value="Chromosome 8"/>
</dbReference>
<dbReference type="Bgee" id="ENSRNOG00000012480">
    <property type="expression patterns" value="Expressed in testis and 19 other cell types or tissues"/>
</dbReference>
<dbReference type="GO" id="GO:0005794">
    <property type="term" value="C:Golgi apparatus"/>
    <property type="evidence" value="ECO:0000250"/>
    <property type="project" value="UniProtKB"/>
</dbReference>
<dbReference type="GO" id="GO:0000139">
    <property type="term" value="C:Golgi membrane"/>
    <property type="evidence" value="ECO:0007669"/>
    <property type="project" value="UniProtKB-SubCell"/>
</dbReference>
<dbReference type="GO" id="GO:0016791">
    <property type="term" value="F:phosphatase activity"/>
    <property type="evidence" value="ECO:0000250"/>
    <property type="project" value="UniProtKB"/>
</dbReference>
<dbReference type="GO" id="GO:0050650">
    <property type="term" value="P:chondroitin sulfate proteoglycan biosynthetic process"/>
    <property type="evidence" value="ECO:0000250"/>
    <property type="project" value="UniProtKB"/>
</dbReference>
<dbReference type="GO" id="GO:0006024">
    <property type="term" value="P:glycosaminoglycan biosynthetic process"/>
    <property type="evidence" value="ECO:0000250"/>
    <property type="project" value="UniProtKB"/>
</dbReference>
<dbReference type="GO" id="GO:0010909">
    <property type="term" value="P:positive regulation of heparan sulfate proteoglycan biosynthetic process"/>
    <property type="evidence" value="ECO:0000250"/>
    <property type="project" value="UniProtKB"/>
</dbReference>
<dbReference type="CDD" id="cd07061">
    <property type="entry name" value="HP_HAP_like"/>
    <property type="match status" value="1"/>
</dbReference>
<dbReference type="FunFam" id="3.40.50.1240:FF:000011">
    <property type="entry name" value="2-phosphoxylose phosphatase 1"/>
    <property type="match status" value="1"/>
</dbReference>
<dbReference type="Gene3D" id="3.40.50.1240">
    <property type="entry name" value="Phosphoglycerate mutase-like"/>
    <property type="match status" value="1"/>
</dbReference>
<dbReference type="InterPro" id="IPR000560">
    <property type="entry name" value="His_Pase_clade-2"/>
</dbReference>
<dbReference type="InterPro" id="IPR029033">
    <property type="entry name" value="His_PPase_superfam"/>
</dbReference>
<dbReference type="InterPro" id="IPR050645">
    <property type="entry name" value="Histidine_acid_phosphatase"/>
</dbReference>
<dbReference type="PANTHER" id="PTHR11567:SF110">
    <property type="entry name" value="2-PHOSPHOXYLOSE PHOSPHATASE 1"/>
    <property type="match status" value="1"/>
</dbReference>
<dbReference type="PANTHER" id="PTHR11567">
    <property type="entry name" value="ACID PHOSPHATASE-RELATED"/>
    <property type="match status" value="1"/>
</dbReference>
<dbReference type="Pfam" id="PF00328">
    <property type="entry name" value="His_Phos_2"/>
    <property type="match status" value="1"/>
</dbReference>
<dbReference type="SUPFAM" id="SSF53254">
    <property type="entry name" value="Phosphoglycerate mutase-like"/>
    <property type="match status" value="1"/>
</dbReference>
<evidence type="ECO:0000250" key="1"/>
<evidence type="ECO:0000250" key="2">
    <source>
        <dbReference type="UniProtKB" id="Q8TE99"/>
    </source>
</evidence>
<evidence type="ECO:0000255" key="3"/>
<evidence type="ECO:0000255" key="4">
    <source>
        <dbReference type="PROSITE-ProRule" id="PRU00498"/>
    </source>
</evidence>
<evidence type="ECO:0000305" key="5"/>
<evidence type="ECO:0000312" key="6">
    <source>
        <dbReference type="RGD" id="1359617"/>
    </source>
</evidence>
<accession>Q66H78</accession>
<reference key="1">
    <citation type="journal article" date="2004" name="Genome Res.">
        <title>The status, quality, and expansion of the NIH full-length cDNA project: the Mammalian Gene Collection (MGC).</title>
        <authorList>
            <consortium name="The MGC Project Team"/>
        </authorList>
    </citation>
    <scope>NUCLEOTIDE SEQUENCE [LARGE SCALE MRNA]</scope>
    <source>
        <tissue>Kidney</tissue>
    </source>
</reference>
<keyword id="KW-0325">Glycoprotein</keyword>
<keyword id="KW-0333">Golgi apparatus</keyword>
<keyword id="KW-0378">Hydrolase</keyword>
<keyword id="KW-0472">Membrane</keyword>
<keyword id="KW-1185">Reference proteome</keyword>
<keyword id="KW-0735">Signal-anchor</keyword>
<keyword id="KW-0812">Transmembrane</keyword>
<keyword id="KW-1133">Transmembrane helix</keyword>
<comment type="function">
    <text evidence="2">Responsible for the 2-O-dephosphorylation of xylose in the glycosaminoglycan-protein linkage region of proteoglycans thereby regulating the amount of mature glycosaminoglycan (GAG) chains. Sulfated glycosaminoglycans (GAGs), including heparan sulfate and chondroitin sulfate, are synthesized on the so-called common GAG-protein linkage region (GlcUAbeta1-3Galbeta1-3Galbeta1-4Xylbeta1-O-Ser) of core proteins, which is formed by the stepwise addition of monosaccharide residues by the respective specific glycosyltransferases. Xylose 2-O-dephosphorylation during completion of linkage region formation is a prerequisite for the initiation and efficient elongation of the repeating disaccharide region of GAG chains.</text>
</comment>
<comment type="catalytic activity">
    <reaction evidence="2">
        <text>3-O-[beta-D-GlcA-(1-&gt;3)-beta-D-Gal-(1-&gt;3)-beta-D-Gal-(1-&gt;4)-beta-D-2-O-P-Xyl]-L-seryl-[protein] + H2O = 3-O-(beta-D-GlcA-(1-&gt;3)-beta-D-Gal-(1-&gt;3)-beta-D-Gal-(1-&gt;4)-beta-D-Xyl)-L-seryl-[protein] + phosphate</text>
        <dbReference type="Rhea" id="RHEA:56512"/>
        <dbReference type="Rhea" id="RHEA-COMP:12573"/>
        <dbReference type="Rhea" id="RHEA-COMP:14559"/>
        <dbReference type="ChEBI" id="CHEBI:15377"/>
        <dbReference type="ChEBI" id="CHEBI:43474"/>
        <dbReference type="ChEBI" id="CHEBI:132093"/>
        <dbReference type="ChEBI" id="CHEBI:140495"/>
    </reaction>
</comment>
<comment type="subunit">
    <text evidence="2">Interacts with B3GAT3; the interaction increases the 2-phosphoxylose phosphatase activity of PXYLP1 during completion of linkage region formation in a B3GAT3-mediated manner.</text>
</comment>
<comment type="subcellular location">
    <subcellularLocation>
        <location evidence="2">Golgi apparatus membrane</location>
        <topology evidence="3">Single-pass type II membrane protein</topology>
    </subcellularLocation>
    <text evidence="2">Colocalizes to Golgi apparatus in a B3GAT3-dependent manner.</text>
</comment>
<comment type="similarity">
    <text evidence="5">Belongs to the histidine acid phosphatase family.</text>
</comment>
<organism>
    <name type="scientific">Rattus norvegicus</name>
    <name type="common">Rat</name>
    <dbReference type="NCBI Taxonomy" id="10116"/>
    <lineage>
        <taxon>Eukaryota</taxon>
        <taxon>Metazoa</taxon>
        <taxon>Chordata</taxon>
        <taxon>Craniata</taxon>
        <taxon>Vertebrata</taxon>
        <taxon>Euteleostomi</taxon>
        <taxon>Mammalia</taxon>
        <taxon>Eutheria</taxon>
        <taxon>Euarchontoglires</taxon>
        <taxon>Glires</taxon>
        <taxon>Rodentia</taxon>
        <taxon>Myomorpha</taxon>
        <taxon>Muroidea</taxon>
        <taxon>Muridae</taxon>
        <taxon>Murinae</taxon>
        <taxon>Rattus</taxon>
    </lineage>
</organism>
<gene>
    <name evidence="6" type="primary">Pxylp1</name>
    <name type="synonym">Acpl2</name>
</gene>
<name>PXYP1_RAT</name>
<sequence>MLYRNRFLVLLALAGLLAFLSLSLQFFHLIPVSTTKNGGSSKSRKRIMPDPVTEPPTVDPVYEALLYCNIPSVAEHSMEGHAPHHYKLVSVHVFIRHGDRYPLYAIPKTKRPEIDCTLVASRKPYHPKLEAFVGHMLKGSGASFESPLGSLPLYPNHPLCEMGELTQTGVVQHLQNGQLLRDIYLRKHKLLPNNWSSDQLYLETTGKSRTLQSGLALLYGFLPEFDWKKVYFKHQPSALFCSGSCYCPLRNQYLEKEQRRQYLLRLKNSDLERTYGEMAKIVDIPTKQLRAANPIDSMLCHFCHNVSFPCSRSGCLGMEHFKVIKTHQIEDERERHEKLLYFGYSLLGAHPILNQTVNRMQRAALGWRDELFTLYSAHDVTLSPILSALGLLEARFPRFAARLVFELWQDRQKPSEHSVRILYNGADVTFHTSFCHDFHKHSPKPMCPLENLVRFVKRDMFVALDGSSTNYYDACHGEGA</sequence>
<protein>
    <recommendedName>
        <fullName evidence="2">2-phosphoxylose phosphatase 1</fullName>
        <ecNumber evidence="2">3.1.3.-</ecNumber>
    </recommendedName>
    <alternativeName>
        <fullName>Acid phosphatase-like protein 2</fullName>
    </alternativeName>
</protein>